<reference key="1">
    <citation type="journal article" date="1999" name="Nature">
        <title>Sequence and analysis of chromosome 2 of the plant Arabidopsis thaliana.</title>
        <authorList>
            <person name="Lin X."/>
            <person name="Kaul S."/>
            <person name="Rounsley S.D."/>
            <person name="Shea T.P."/>
            <person name="Benito M.-I."/>
            <person name="Town C.D."/>
            <person name="Fujii C.Y."/>
            <person name="Mason T.M."/>
            <person name="Bowman C.L."/>
            <person name="Barnstead M.E."/>
            <person name="Feldblyum T.V."/>
            <person name="Buell C.R."/>
            <person name="Ketchum K.A."/>
            <person name="Lee J.J."/>
            <person name="Ronning C.M."/>
            <person name="Koo H.L."/>
            <person name="Moffat K.S."/>
            <person name="Cronin L.A."/>
            <person name="Shen M."/>
            <person name="Pai G."/>
            <person name="Van Aken S."/>
            <person name="Umayam L."/>
            <person name="Tallon L.J."/>
            <person name="Gill J.E."/>
            <person name="Adams M.D."/>
            <person name="Carrera A.J."/>
            <person name="Creasy T.H."/>
            <person name="Goodman H.M."/>
            <person name="Somerville C.R."/>
            <person name="Copenhaver G.P."/>
            <person name="Preuss D."/>
            <person name="Nierman W.C."/>
            <person name="White O."/>
            <person name="Eisen J.A."/>
            <person name="Salzberg S.L."/>
            <person name="Fraser C.M."/>
            <person name="Venter J.C."/>
        </authorList>
    </citation>
    <scope>NUCLEOTIDE SEQUENCE [LARGE SCALE GENOMIC DNA]</scope>
    <source>
        <strain>cv. Columbia</strain>
    </source>
</reference>
<reference key="2">
    <citation type="journal article" date="2017" name="Plant J.">
        <title>Araport11: a complete reannotation of the Arabidopsis thaliana reference genome.</title>
        <authorList>
            <person name="Cheng C.Y."/>
            <person name="Krishnakumar V."/>
            <person name="Chan A.P."/>
            <person name="Thibaud-Nissen F."/>
            <person name="Schobel S."/>
            <person name="Town C.D."/>
        </authorList>
    </citation>
    <scope>GENOME REANNOTATION</scope>
    <source>
        <strain>cv. Columbia</strain>
    </source>
</reference>
<reference key="3">
    <citation type="journal article" date="2004" name="Prog. Lipid Res.">
        <title>GDSL family of serine esterases/lipases.</title>
        <authorList>
            <person name="Akoh C.C."/>
            <person name="Lee G.-C."/>
            <person name="Liaw Y.-C."/>
            <person name="Huang T.-H."/>
            <person name="Shaw J.-F."/>
        </authorList>
    </citation>
    <scope>REVIEW</scope>
</reference>
<reference key="4">
    <citation type="journal article" date="2008" name="Pak. J. Biol. Sci.">
        <title>Sequence analysis of GDSL lipase gene family in Arabidopsis thaliana.</title>
        <authorList>
            <person name="Ling H."/>
        </authorList>
    </citation>
    <scope>GENE FAMILY</scope>
</reference>
<dbReference type="EC" id="3.1.1.-"/>
<dbReference type="EMBL" id="AC002338">
    <property type="protein sequence ID" value="AAC16946.1"/>
    <property type="molecule type" value="Genomic_DNA"/>
</dbReference>
<dbReference type="EMBL" id="AC004165">
    <property type="protein sequence ID" value="AAM14915.1"/>
    <property type="molecule type" value="Genomic_DNA"/>
</dbReference>
<dbReference type="EMBL" id="CP002685">
    <property type="protein sequence ID" value="AEC08359.1"/>
    <property type="molecule type" value="Genomic_DNA"/>
</dbReference>
<dbReference type="PIR" id="T00578">
    <property type="entry name" value="T00578"/>
</dbReference>
<dbReference type="RefSeq" id="NP_180581.1">
    <property type="nucleotide sequence ID" value="NM_128575.2"/>
</dbReference>
<dbReference type="SMR" id="O22918"/>
<dbReference type="FunCoup" id="O22918">
    <property type="interactions" value="110"/>
</dbReference>
<dbReference type="GlyGen" id="O22918">
    <property type="glycosylation" value="3 sites"/>
</dbReference>
<dbReference type="PaxDb" id="3702-AT2G30220.1"/>
<dbReference type="ProteomicsDB" id="224757"/>
<dbReference type="EnsemblPlants" id="AT2G30220.1">
    <property type="protein sequence ID" value="AT2G30220.1"/>
    <property type="gene ID" value="AT2G30220"/>
</dbReference>
<dbReference type="GeneID" id="817572"/>
<dbReference type="Gramene" id="AT2G30220.1">
    <property type="protein sequence ID" value="AT2G30220.1"/>
    <property type="gene ID" value="AT2G30220"/>
</dbReference>
<dbReference type="KEGG" id="ath:AT2G30220"/>
<dbReference type="Araport" id="AT2G30220"/>
<dbReference type="TAIR" id="AT2G30220"/>
<dbReference type="eggNOG" id="ENOG502QSNM">
    <property type="taxonomic scope" value="Eukaryota"/>
</dbReference>
<dbReference type="HOGENOM" id="CLU_015101_0_1_1"/>
<dbReference type="InParanoid" id="O22918"/>
<dbReference type="OMA" id="NHLPYGV"/>
<dbReference type="PhylomeDB" id="O22918"/>
<dbReference type="BioCyc" id="ARA:AT2G30220-MONOMER"/>
<dbReference type="PRO" id="PR:O22918"/>
<dbReference type="Proteomes" id="UP000006548">
    <property type="component" value="Chromosome 2"/>
</dbReference>
<dbReference type="ExpressionAtlas" id="O22918">
    <property type="expression patterns" value="baseline and differential"/>
</dbReference>
<dbReference type="GO" id="GO:0005576">
    <property type="term" value="C:extracellular region"/>
    <property type="evidence" value="ECO:0007669"/>
    <property type="project" value="UniProtKB-SubCell"/>
</dbReference>
<dbReference type="GO" id="GO:0016788">
    <property type="term" value="F:hydrolase activity, acting on ester bonds"/>
    <property type="evidence" value="ECO:0007669"/>
    <property type="project" value="InterPro"/>
</dbReference>
<dbReference type="GO" id="GO:0016042">
    <property type="term" value="P:lipid catabolic process"/>
    <property type="evidence" value="ECO:0007669"/>
    <property type="project" value="UniProtKB-KW"/>
</dbReference>
<dbReference type="CDD" id="cd01837">
    <property type="entry name" value="SGNH_plant_lipase_like"/>
    <property type="match status" value="1"/>
</dbReference>
<dbReference type="Gene3D" id="3.40.50.1110">
    <property type="entry name" value="SGNH hydrolase"/>
    <property type="match status" value="1"/>
</dbReference>
<dbReference type="InterPro" id="IPR001087">
    <property type="entry name" value="GDSL"/>
</dbReference>
<dbReference type="InterPro" id="IPR050592">
    <property type="entry name" value="GDSL_lipolytic_enzyme"/>
</dbReference>
<dbReference type="InterPro" id="IPR036514">
    <property type="entry name" value="SGNH_hydro_sf"/>
</dbReference>
<dbReference type="InterPro" id="IPR035669">
    <property type="entry name" value="SGNH_plant_lipase-like"/>
</dbReference>
<dbReference type="PANTHER" id="PTHR45642">
    <property type="entry name" value="GDSL ESTERASE/LIPASE EXL3"/>
    <property type="match status" value="1"/>
</dbReference>
<dbReference type="PANTHER" id="PTHR45642:SF148">
    <property type="entry name" value="GENOME ASSEMBLY, CHROMOSOME: A04"/>
    <property type="match status" value="1"/>
</dbReference>
<dbReference type="Pfam" id="PF00657">
    <property type="entry name" value="Lipase_GDSL"/>
    <property type="match status" value="1"/>
</dbReference>
<dbReference type="SUPFAM" id="SSF52266">
    <property type="entry name" value="SGNH hydrolase"/>
    <property type="match status" value="1"/>
</dbReference>
<accession>O22918</accession>
<feature type="signal peptide" evidence="2">
    <location>
        <begin position="1"/>
        <end position="22"/>
    </location>
</feature>
<feature type="chain" id="PRO_0000367382" description="GDSL esterase/lipase At2g30220">
    <location>
        <begin position="23"/>
        <end position="358"/>
    </location>
</feature>
<feature type="active site" description="Nucleophile" evidence="1">
    <location>
        <position position="40"/>
    </location>
</feature>
<feature type="active site" evidence="1">
    <location>
        <position position="332"/>
    </location>
</feature>
<feature type="active site" evidence="1">
    <location>
        <position position="335"/>
    </location>
</feature>
<feature type="glycosylation site" description="N-linked (GlcNAc...) asparagine" evidence="2">
    <location>
        <position position="25"/>
    </location>
</feature>
<feature type="glycosylation site" description="N-linked (GlcNAc...) asparagine" evidence="2">
    <location>
        <position position="102"/>
    </location>
</feature>
<feature type="glycosylation site" description="N-linked (GlcNAc...) asparagine" evidence="2">
    <location>
        <position position="324"/>
    </location>
</feature>
<name>GDL41_ARATH</name>
<comment type="subcellular location">
    <subcellularLocation>
        <location evidence="3">Secreted</location>
    </subcellularLocation>
</comment>
<comment type="similarity">
    <text evidence="3">Belongs to the 'GDSL' lipolytic enzyme family.</text>
</comment>
<evidence type="ECO:0000250" key="1"/>
<evidence type="ECO:0000255" key="2"/>
<evidence type="ECO:0000305" key="3"/>
<organism>
    <name type="scientific">Arabidopsis thaliana</name>
    <name type="common">Mouse-ear cress</name>
    <dbReference type="NCBI Taxonomy" id="3702"/>
    <lineage>
        <taxon>Eukaryota</taxon>
        <taxon>Viridiplantae</taxon>
        <taxon>Streptophyta</taxon>
        <taxon>Embryophyta</taxon>
        <taxon>Tracheophyta</taxon>
        <taxon>Spermatophyta</taxon>
        <taxon>Magnoliopsida</taxon>
        <taxon>eudicotyledons</taxon>
        <taxon>Gunneridae</taxon>
        <taxon>Pentapetalae</taxon>
        <taxon>rosids</taxon>
        <taxon>malvids</taxon>
        <taxon>Brassicales</taxon>
        <taxon>Brassicaceae</taxon>
        <taxon>Camelineae</taxon>
        <taxon>Arabidopsis</taxon>
    </lineage>
</organism>
<gene>
    <name type="ordered locus">At2g30220</name>
    <name type="ORF">T9D9.3</name>
</gene>
<keyword id="KW-0325">Glycoprotein</keyword>
<keyword id="KW-0378">Hydrolase</keyword>
<keyword id="KW-0442">Lipid degradation</keyword>
<keyword id="KW-0443">Lipid metabolism</keyword>
<keyword id="KW-1185">Reference proteome</keyword>
<keyword id="KW-0964">Secreted</keyword>
<keyword id="KW-0732">Signal</keyword>
<sequence>MYISKTIVFGLFVATLLVSCNADANTTQPLFPAILIFGDSTADTGNNNYYSQAVFKANHLPYGVDLPGHEANGRFSNGKLISDVISTKLNIKEFVPPFLQPNISDQDIVTGVCFASAGAGYDDETSLSSKAIPVSQQPSMFKNYIARLKGIVGDKKAMEIINNALVVISAGPNDFILNFYDIPIRRLEYPTIYGYQDFVLKRLDGFVRELYSLGCRNILVGGLPPMGCLPIQLTAKLRTILGICVEQENKDSILYNQKLVKKLPEIQASLPGSKFLYANVYDPVMDMIRNPSKYGFKETKKGCCGTGYLETSFLCTSLSKTCPNHSDHLFWDSIHPSEAAYKYLGNFIDAQIQEWLKT</sequence>
<proteinExistence type="inferred from homology"/>
<protein>
    <recommendedName>
        <fullName>GDSL esterase/lipase At2g30220</fullName>
        <ecNumber>3.1.1.-</ecNumber>
    </recommendedName>
    <alternativeName>
        <fullName>Extracellular lipase At2g30220</fullName>
    </alternativeName>
</protein>